<comment type="function">
    <text evidence="1">Specifically dimethylates two adjacent adenosines (A1518 and A1519) in the loop of a conserved hairpin near the 3'-end of 16S rRNA in the 30S particle. May play a critical role in biogenesis of 30S subunits.</text>
</comment>
<comment type="catalytic activity">
    <reaction evidence="1">
        <text>adenosine(1518)/adenosine(1519) in 16S rRNA + 4 S-adenosyl-L-methionine = N(6)-dimethyladenosine(1518)/N(6)-dimethyladenosine(1519) in 16S rRNA + 4 S-adenosyl-L-homocysteine + 4 H(+)</text>
        <dbReference type="Rhea" id="RHEA:19609"/>
        <dbReference type="Rhea" id="RHEA-COMP:10232"/>
        <dbReference type="Rhea" id="RHEA-COMP:10233"/>
        <dbReference type="ChEBI" id="CHEBI:15378"/>
        <dbReference type="ChEBI" id="CHEBI:57856"/>
        <dbReference type="ChEBI" id="CHEBI:59789"/>
        <dbReference type="ChEBI" id="CHEBI:74411"/>
        <dbReference type="ChEBI" id="CHEBI:74493"/>
        <dbReference type="EC" id="2.1.1.182"/>
    </reaction>
</comment>
<comment type="subcellular location">
    <subcellularLocation>
        <location evidence="1">Cytoplasm</location>
    </subcellularLocation>
</comment>
<comment type="similarity">
    <text evidence="1">Belongs to the class I-like SAM-binding methyltransferase superfamily. rRNA adenine N(6)-methyltransferase family. RsmA subfamily.</text>
</comment>
<protein>
    <recommendedName>
        <fullName evidence="1">Ribosomal RNA small subunit methyltransferase A</fullName>
        <ecNumber evidence="1">2.1.1.182</ecNumber>
    </recommendedName>
    <alternativeName>
        <fullName evidence="1">16S rRNA (adenine(1518)-N(6)/adenine(1519)-N(6))-dimethyltransferase</fullName>
    </alternativeName>
    <alternativeName>
        <fullName evidence="1">16S rRNA dimethyladenosine transferase</fullName>
    </alternativeName>
    <alternativeName>
        <fullName evidence="1">16S rRNA dimethylase</fullName>
    </alternativeName>
    <alternativeName>
        <fullName evidence="1">S-adenosylmethionine-6-N', N'-adenosyl(rRNA) dimethyltransferase</fullName>
    </alternativeName>
</protein>
<gene>
    <name evidence="1" type="primary">rsmA</name>
    <name evidence="1" type="synonym">ksgA</name>
    <name type="ordered locus">LJ_0205</name>
</gene>
<feature type="chain" id="PRO_0000101544" description="Ribosomal RNA small subunit methyltransferase A">
    <location>
        <begin position="1"/>
        <end position="296"/>
    </location>
</feature>
<feature type="binding site" evidence="1">
    <location>
        <position position="31"/>
    </location>
    <ligand>
        <name>S-adenosyl-L-methionine</name>
        <dbReference type="ChEBI" id="CHEBI:59789"/>
    </ligand>
</feature>
<feature type="binding site" evidence="1">
    <location>
        <position position="33"/>
    </location>
    <ligand>
        <name>S-adenosyl-L-methionine</name>
        <dbReference type="ChEBI" id="CHEBI:59789"/>
    </ligand>
</feature>
<feature type="binding site" evidence="1">
    <location>
        <position position="58"/>
    </location>
    <ligand>
        <name>S-adenosyl-L-methionine</name>
        <dbReference type="ChEBI" id="CHEBI:59789"/>
    </ligand>
</feature>
<feature type="binding site" evidence="1">
    <location>
        <position position="79"/>
    </location>
    <ligand>
        <name>S-adenosyl-L-methionine</name>
        <dbReference type="ChEBI" id="CHEBI:59789"/>
    </ligand>
</feature>
<feature type="binding site" evidence="1">
    <location>
        <position position="111"/>
    </location>
    <ligand>
        <name>S-adenosyl-L-methionine</name>
        <dbReference type="ChEBI" id="CHEBI:59789"/>
    </ligand>
</feature>
<feature type="binding site" evidence="1">
    <location>
        <position position="136"/>
    </location>
    <ligand>
        <name>S-adenosyl-L-methionine</name>
        <dbReference type="ChEBI" id="CHEBI:59789"/>
    </ligand>
</feature>
<proteinExistence type="inferred from homology"/>
<organism>
    <name type="scientific">Lactobacillus johnsonii (strain CNCM I-12250 / La1 / NCC 533)</name>
    <dbReference type="NCBI Taxonomy" id="257314"/>
    <lineage>
        <taxon>Bacteria</taxon>
        <taxon>Bacillati</taxon>
        <taxon>Bacillota</taxon>
        <taxon>Bacilli</taxon>
        <taxon>Lactobacillales</taxon>
        <taxon>Lactobacillaceae</taxon>
        <taxon>Lactobacillus</taxon>
    </lineage>
</organism>
<keyword id="KW-0963">Cytoplasm</keyword>
<keyword id="KW-0489">Methyltransferase</keyword>
<keyword id="KW-0694">RNA-binding</keyword>
<keyword id="KW-0698">rRNA processing</keyword>
<keyword id="KW-0949">S-adenosyl-L-methionine</keyword>
<keyword id="KW-0808">Transferase</keyword>
<sequence>MSNSMPIASPVRTQAIVNRYFMHAKKNLGQNFLVDLPAIKGIVEAADIQPGDQVIEIGPGIGSLTEQLLLAGAKVLAYEVDQDLPEILNNELPQKIDGEELKDRFKLVMKDVLKANFVEDNDGFLDLSKSVKIVANLPYYITTPIIFNLIKSDLDFSSLTLMMQKEVAERLVAKPKTKEYGPLSIAVQSRMNVRLAEEVKSTSFMPRPKVDSAVVVLTPLLEKPDINDYAFFDHVVKMCFAQRRKTLANNLKTLIKDKDEREKLINDLGLDVRVRPEELTLNQFVQLAHLLKDRQA</sequence>
<reference key="1">
    <citation type="journal article" date="2004" name="Proc. Natl. Acad. Sci. U.S.A.">
        <title>The genome sequence of the probiotic intestinal bacterium Lactobacillus johnsonii NCC 533.</title>
        <authorList>
            <person name="Pridmore R.D."/>
            <person name="Berger B."/>
            <person name="Desiere F."/>
            <person name="Vilanova D."/>
            <person name="Barretto C."/>
            <person name="Pittet A.-C."/>
            <person name="Zwahlen M.-C."/>
            <person name="Rouvet M."/>
            <person name="Altermann E."/>
            <person name="Barrangou R."/>
            <person name="Mollet B."/>
            <person name="Mercenier A."/>
            <person name="Klaenhammer T."/>
            <person name="Arigoni F."/>
            <person name="Schell M.A."/>
        </authorList>
    </citation>
    <scope>NUCLEOTIDE SEQUENCE [LARGE SCALE GENOMIC DNA]</scope>
    <source>
        <strain>CNCM I-1225 / La1 / NCC 533</strain>
    </source>
</reference>
<name>RSMA_LACJO</name>
<accession>Q74LI0</accession>
<evidence type="ECO:0000255" key="1">
    <source>
        <dbReference type="HAMAP-Rule" id="MF_00607"/>
    </source>
</evidence>
<dbReference type="EC" id="2.1.1.182" evidence="1"/>
<dbReference type="EMBL" id="AE017198">
    <property type="protein sequence ID" value="AAS08187.1"/>
    <property type="molecule type" value="Genomic_DNA"/>
</dbReference>
<dbReference type="RefSeq" id="WP_011161402.1">
    <property type="nucleotide sequence ID" value="NC_005362.1"/>
</dbReference>
<dbReference type="SMR" id="Q74LI0"/>
<dbReference type="GeneID" id="83569664"/>
<dbReference type="KEGG" id="ljo:LJ_0205"/>
<dbReference type="eggNOG" id="COG0030">
    <property type="taxonomic scope" value="Bacteria"/>
</dbReference>
<dbReference type="HOGENOM" id="CLU_041220_0_0_9"/>
<dbReference type="Proteomes" id="UP000000581">
    <property type="component" value="Chromosome"/>
</dbReference>
<dbReference type="GO" id="GO:0005829">
    <property type="term" value="C:cytosol"/>
    <property type="evidence" value="ECO:0007669"/>
    <property type="project" value="TreeGrafter"/>
</dbReference>
<dbReference type="GO" id="GO:0052908">
    <property type="term" value="F:16S rRNA (adenine(1518)-N(6)/adenine(1519)-N(6))-dimethyltransferase activity"/>
    <property type="evidence" value="ECO:0007669"/>
    <property type="project" value="UniProtKB-EC"/>
</dbReference>
<dbReference type="GO" id="GO:0003723">
    <property type="term" value="F:RNA binding"/>
    <property type="evidence" value="ECO:0007669"/>
    <property type="project" value="UniProtKB-KW"/>
</dbReference>
<dbReference type="FunFam" id="1.10.8.100:FF:000001">
    <property type="entry name" value="Ribosomal RNA small subunit methyltransferase A"/>
    <property type="match status" value="1"/>
</dbReference>
<dbReference type="FunFam" id="3.40.50.150:FF:000023">
    <property type="entry name" value="Ribosomal RNA small subunit methyltransferase A"/>
    <property type="match status" value="1"/>
</dbReference>
<dbReference type="Gene3D" id="1.10.8.100">
    <property type="entry name" value="Ribosomal RNA adenine dimethylase-like, domain 2"/>
    <property type="match status" value="1"/>
</dbReference>
<dbReference type="Gene3D" id="3.40.50.150">
    <property type="entry name" value="Vaccinia Virus protein VP39"/>
    <property type="match status" value="1"/>
</dbReference>
<dbReference type="HAMAP" id="MF_00607">
    <property type="entry name" value="16SrRNA_methyltr_A"/>
    <property type="match status" value="1"/>
</dbReference>
<dbReference type="InterPro" id="IPR001737">
    <property type="entry name" value="KsgA/Erm"/>
</dbReference>
<dbReference type="InterPro" id="IPR023165">
    <property type="entry name" value="rRNA_Ade_diMease-like_C"/>
</dbReference>
<dbReference type="InterPro" id="IPR020596">
    <property type="entry name" value="rRNA_Ade_Mease_Trfase_CS"/>
</dbReference>
<dbReference type="InterPro" id="IPR020598">
    <property type="entry name" value="rRNA_Ade_methylase_Trfase_N"/>
</dbReference>
<dbReference type="InterPro" id="IPR011530">
    <property type="entry name" value="rRNA_adenine_dimethylase"/>
</dbReference>
<dbReference type="InterPro" id="IPR029063">
    <property type="entry name" value="SAM-dependent_MTases_sf"/>
</dbReference>
<dbReference type="NCBIfam" id="TIGR00755">
    <property type="entry name" value="ksgA"/>
    <property type="match status" value="1"/>
</dbReference>
<dbReference type="PANTHER" id="PTHR11727">
    <property type="entry name" value="DIMETHYLADENOSINE TRANSFERASE"/>
    <property type="match status" value="1"/>
</dbReference>
<dbReference type="PANTHER" id="PTHR11727:SF7">
    <property type="entry name" value="DIMETHYLADENOSINE TRANSFERASE-RELATED"/>
    <property type="match status" value="1"/>
</dbReference>
<dbReference type="Pfam" id="PF00398">
    <property type="entry name" value="RrnaAD"/>
    <property type="match status" value="1"/>
</dbReference>
<dbReference type="SMART" id="SM00650">
    <property type="entry name" value="rADc"/>
    <property type="match status" value="1"/>
</dbReference>
<dbReference type="SUPFAM" id="SSF53335">
    <property type="entry name" value="S-adenosyl-L-methionine-dependent methyltransferases"/>
    <property type="match status" value="1"/>
</dbReference>
<dbReference type="PROSITE" id="PS01131">
    <property type="entry name" value="RRNA_A_DIMETH"/>
    <property type="match status" value="1"/>
</dbReference>
<dbReference type="PROSITE" id="PS51689">
    <property type="entry name" value="SAM_RNA_A_N6_MT"/>
    <property type="match status" value="1"/>
</dbReference>